<comment type="function">
    <text>PsaA and PsaB bind P700, the primary electron donor of photosystem I (PSI), as well as the electron acceptors A0, A1 and FX. PSI is a plastocyanin-ferredoxin oxidoreductase, converting photonic excitation into a charge separation, which transfers an electron from the donor P700 chlorophyll pair to the spectroscopically characterized acceptors A0, A1, FX, FA and FB in turn. Oxidized P700 is reduced on the lumenal side of the thylakoid membrane by plastocyanin.</text>
</comment>
<comment type="catalytic activity">
    <reaction evidence="1">
        <text>reduced [plastocyanin] + hnu + oxidized [2Fe-2S]-[ferredoxin] = oxidized [plastocyanin] + reduced [2Fe-2S]-[ferredoxin]</text>
        <dbReference type="Rhea" id="RHEA:30407"/>
        <dbReference type="Rhea" id="RHEA-COMP:10000"/>
        <dbReference type="Rhea" id="RHEA-COMP:10001"/>
        <dbReference type="Rhea" id="RHEA-COMP:10039"/>
        <dbReference type="Rhea" id="RHEA-COMP:10040"/>
        <dbReference type="ChEBI" id="CHEBI:29036"/>
        <dbReference type="ChEBI" id="CHEBI:30212"/>
        <dbReference type="ChEBI" id="CHEBI:33737"/>
        <dbReference type="ChEBI" id="CHEBI:33738"/>
        <dbReference type="ChEBI" id="CHEBI:49552"/>
        <dbReference type="EC" id="1.97.1.12"/>
    </reaction>
</comment>
<comment type="cofactor">
    <text evidence="1">P700 is a chlorophyll a/chlorophyll a' dimer, A0 is one or more chlorophyll a, A1 is one or both phylloquinones and FX is a shared 4Fe-4S iron-sulfur center.</text>
</comment>
<comment type="subunit">
    <text evidence="1">The PsaA/B heterodimer binds the P700 chlorophyll special pair and subsequent electron acceptors. PSI consists of a core antenna complex that captures photons, and an electron transfer chain that converts photonic excitation into a charge separation. The eukaryotic PSI reaction center is composed of at least 11 subunits.</text>
</comment>
<comment type="subcellular location">
    <subcellularLocation>
        <location evidence="1">Plastid</location>
        <location evidence="1">Chloroplast thylakoid membrane</location>
        <topology evidence="1">Multi-pass membrane protein</topology>
    </subcellularLocation>
</comment>
<comment type="similarity">
    <text evidence="1">Belongs to the PsaA/PsaB family.</text>
</comment>
<gene>
    <name evidence="1" type="primary">psaA</name>
</gene>
<reference key="1">
    <citation type="submission" date="2007-03" db="EMBL/GenBank/DDBJ databases">
        <title>Sequencing analysis of Barbarea verna chloroplast DNA.</title>
        <authorList>
            <person name="Hosouchi T."/>
            <person name="Tsuruoka H."/>
            <person name="Kotani H."/>
        </authorList>
    </citation>
    <scope>NUCLEOTIDE SEQUENCE [LARGE SCALE GENOMIC DNA]</scope>
</reference>
<dbReference type="EC" id="1.97.1.12" evidence="1"/>
<dbReference type="EMBL" id="AP009370">
    <property type="protein sequence ID" value="BAF50110.1"/>
    <property type="molecule type" value="Genomic_DNA"/>
</dbReference>
<dbReference type="RefSeq" id="YP_001123286.1">
    <property type="nucleotide sequence ID" value="NC_009269.1"/>
</dbReference>
<dbReference type="SMR" id="A4QKA5"/>
<dbReference type="GeneID" id="4961914"/>
<dbReference type="GO" id="GO:0009535">
    <property type="term" value="C:chloroplast thylakoid membrane"/>
    <property type="evidence" value="ECO:0007669"/>
    <property type="project" value="UniProtKB-SubCell"/>
</dbReference>
<dbReference type="GO" id="GO:0009522">
    <property type="term" value="C:photosystem I"/>
    <property type="evidence" value="ECO:0007669"/>
    <property type="project" value="UniProtKB-KW"/>
</dbReference>
<dbReference type="GO" id="GO:0051539">
    <property type="term" value="F:4 iron, 4 sulfur cluster binding"/>
    <property type="evidence" value="ECO:0007669"/>
    <property type="project" value="UniProtKB-KW"/>
</dbReference>
<dbReference type="GO" id="GO:0016168">
    <property type="term" value="F:chlorophyll binding"/>
    <property type="evidence" value="ECO:0007669"/>
    <property type="project" value="UniProtKB-KW"/>
</dbReference>
<dbReference type="GO" id="GO:0009055">
    <property type="term" value="F:electron transfer activity"/>
    <property type="evidence" value="ECO:0007669"/>
    <property type="project" value="UniProtKB-UniRule"/>
</dbReference>
<dbReference type="GO" id="GO:0000287">
    <property type="term" value="F:magnesium ion binding"/>
    <property type="evidence" value="ECO:0007669"/>
    <property type="project" value="UniProtKB-UniRule"/>
</dbReference>
<dbReference type="GO" id="GO:0016491">
    <property type="term" value="F:oxidoreductase activity"/>
    <property type="evidence" value="ECO:0007669"/>
    <property type="project" value="UniProtKB-KW"/>
</dbReference>
<dbReference type="GO" id="GO:0015979">
    <property type="term" value="P:photosynthesis"/>
    <property type="evidence" value="ECO:0007669"/>
    <property type="project" value="UniProtKB-UniRule"/>
</dbReference>
<dbReference type="FunFam" id="1.20.1130.10:FF:000001">
    <property type="entry name" value="Photosystem I P700 chlorophyll a apoprotein A2"/>
    <property type="match status" value="1"/>
</dbReference>
<dbReference type="Gene3D" id="1.20.1130.10">
    <property type="entry name" value="Photosystem I PsaA/PsaB"/>
    <property type="match status" value="1"/>
</dbReference>
<dbReference type="HAMAP" id="MF_00458">
    <property type="entry name" value="PSI_PsaA"/>
    <property type="match status" value="1"/>
</dbReference>
<dbReference type="InterPro" id="IPR006243">
    <property type="entry name" value="PSI_PsaA"/>
</dbReference>
<dbReference type="InterPro" id="IPR001280">
    <property type="entry name" value="PSI_PsaA/B"/>
</dbReference>
<dbReference type="InterPro" id="IPR020586">
    <property type="entry name" value="PSI_PsaA/B_CS"/>
</dbReference>
<dbReference type="InterPro" id="IPR036408">
    <property type="entry name" value="PSI_PsaA/B_sf"/>
</dbReference>
<dbReference type="NCBIfam" id="TIGR01335">
    <property type="entry name" value="psaA"/>
    <property type="match status" value="1"/>
</dbReference>
<dbReference type="PANTHER" id="PTHR30128">
    <property type="entry name" value="OUTER MEMBRANE PROTEIN, OMPA-RELATED"/>
    <property type="match status" value="1"/>
</dbReference>
<dbReference type="PANTHER" id="PTHR30128:SF19">
    <property type="entry name" value="PHOTOSYSTEM I P700 CHLOROPHYLL A APOPROTEIN A1-RELATED"/>
    <property type="match status" value="1"/>
</dbReference>
<dbReference type="Pfam" id="PF00223">
    <property type="entry name" value="PsaA_PsaB"/>
    <property type="match status" value="1"/>
</dbReference>
<dbReference type="PIRSF" id="PIRSF002905">
    <property type="entry name" value="PSI_A"/>
    <property type="match status" value="1"/>
</dbReference>
<dbReference type="PRINTS" id="PR00257">
    <property type="entry name" value="PHOTSYSPSAAB"/>
</dbReference>
<dbReference type="SUPFAM" id="SSF81558">
    <property type="entry name" value="Photosystem I subunits PsaA/PsaB"/>
    <property type="match status" value="1"/>
</dbReference>
<dbReference type="PROSITE" id="PS00419">
    <property type="entry name" value="PHOTOSYSTEM_I_PSAAB"/>
    <property type="match status" value="1"/>
</dbReference>
<protein>
    <recommendedName>
        <fullName evidence="1">Photosystem I P700 chlorophyll a apoprotein A1</fullName>
        <ecNumber evidence="1">1.97.1.12</ecNumber>
    </recommendedName>
    <alternativeName>
        <fullName evidence="1">PSI-A</fullName>
    </alternativeName>
    <alternativeName>
        <fullName evidence="1">PsaA</fullName>
    </alternativeName>
</protein>
<feature type="chain" id="PRO_0000294217" description="Photosystem I P700 chlorophyll a apoprotein A1">
    <location>
        <begin position="1"/>
        <end position="750"/>
    </location>
</feature>
<feature type="transmembrane region" description="Helical; Name=I" evidence="1">
    <location>
        <begin position="70"/>
        <end position="93"/>
    </location>
</feature>
<feature type="transmembrane region" description="Helical; Name=II" evidence="1">
    <location>
        <begin position="156"/>
        <end position="179"/>
    </location>
</feature>
<feature type="transmembrane region" description="Helical; Name=III" evidence="1">
    <location>
        <begin position="195"/>
        <end position="219"/>
    </location>
</feature>
<feature type="transmembrane region" description="Helical; Name=IV" evidence="1">
    <location>
        <begin position="291"/>
        <end position="309"/>
    </location>
</feature>
<feature type="transmembrane region" description="Helical; Name=V" evidence="1">
    <location>
        <begin position="346"/>
        <end position="369"/>
    </location>
</feature>
<feature type="transmembrane region" description="Helical; Name=VI" evidence="1">
    <location>
        <begin position="385"/>
        <end position="411"/>
    </location>
</feature>
<feature type="transmembrane region" description="Helical; Name=VII" evidence="1">
    <location>
        <begin position="433"/>
        <end position="455"/>
    </location>
</feature>
<feature type="transmembrane region" description="Helical; Name=VIII" evidence="1">
    <location>
        <begin position="531"/>
        <end position="549"/>
    </location>
</feature>
<feature type="transmembrane region" description="Helical; Name=IX" evidence="1">
    <location>
        <begin position="589"/>
        <end position="610"/>
    </location>
</feature>
<feature type="transmembrane region" description="Helical; Name=X" evidence="1">
    <location>
        <begin position="664"/>
        <end position="686"/>
    </location>
</feature>
<feature type="transmembrane region" description="Helical; Name=XI" evidence="1">
    <location>
        <begin position="724"/>
        <end position="744"/>
    </location>
</feature>
<feature type="binding site" evidence="1">
    <location>
        <position position="573"/>
    </location>
    <ligand>
        <name>[4Fe-4S] cluster</name>
        <dbReference type="ChEBI" id="CHEBI:49883"/>
        <note>ligand shared between dimeric partners</note>
    </ligand>
</feature>
<feature type="binding site" evidence="1">
    <location>
        <position position="582"/>
    </location>
    <ligand>
        <name>[4Fe-4S] cluster</name>
        <dbReference type="ChEBI" id="CHEBI:49883"/>
        <note>ligand shared between dimeric partners</note>
    </ligand>
</feature>
<feature type="binding site" description="axial binding residue" evidence="1">
    <location>
        <position position="675"/>
    </location>
    <ligand>
        <name>chlorophyll a'</name>
        <dbReference type="ChEBI" id="CHEBI:189419"/>
        <label>A1</label>
    </ligand>
    <ligandPart>
        <name>Mg</name>
        <dbReference type="ChEBI" id="CHEBI:25107"/>
    </ligandPart>
</feature>
<feature type="binding site" description="axial binding residue" evidence="1">
    <location>
        <position position="683"/>
    </location>
    <ligand>
        <name>chlorophyll a</name>
        <dbReference type="ChEBI" id="CHEBI:58416"/>
        <label>A3</label>
    </ligand>
    <ligandPart>
        <name>Mg</name>
        <dbReference type="ChEBI" id="CHEBI:25107"/>
    </ligandPart>
</feature>
<feature type="binding site" evidence="1">
    <location>
        <position position="691"/>
    </location>
    <ligand>
        <name>chlorophyll a</name>
        <dbReference type="ChEBI" id="CHEBI:58416"/>
        <label>A3</label>
    </ligand>
</feature>
<feature type="binding site" evidence="1">
    <location>
        <position position="692"/>
    </location>
    <ligand>
        <name>phylloquinone</name>
        <dbReference type="ChEBI" id="CHEBI:18067"/>
        <label>A</label>
    </ligand>
</feature>
<evidence type="ECO:0000255" key="1">
    <source>
        <dbReference type="HAMAP-Rule" id="MF_00458"/>
    </source>
</evidence>
<organism>
    <name type="scientific">Barbarea verna</name>
    <name type="common">Land cress</name>
    <name type="synonym">Erysimum vernum</name>
    <dbReference type="NCBI Taxonomy" id="50458"/>
    <lineage>
        <taxon>Eukaryota</taxon>
        <taxon>Viridiplantae</taxon>
        <taxon>Streptophyta</taxon>
        <taxon>Embryophyta</taxon>
        <taxon>Tracheophyta</taxon>
        <taxon>Spermatophyta</taxon>
        <taxon>Magnoliopsida</taxon>
        <taxon>eudicotyledons</taxon>
        <taxon>Gunneridae</taxon>
        <taxon>Pentapetalae</taxon>
        <taxon>rosids</taxon>
        <taxon>malvids</taxon>
        <taxon>Brassicales</taxon>
        <taxon>Brassicaceae</taxon>
        <taxon>Cardamineae</taxon>
        <taxon>Barbarea</taxon>
    </lineage>
</organism>
<name>PSAA_BARVE</name>
<proteinExistence type="inferred from homology"/>
<keyword id="KW-0004">4Fe-4S</keyword>
<keyword id="KW-0148">Chlorophyll</keyword>
<keyword id="KW-0150">Chloroplast</keyword>
<keyword id="KW-0157">Chromophore</keyword>
<keyword id="KW-0249">Electron transport</keyword>
<keyword id="KW-0408">Iron</keyword>
<keyword id="KW-0411">Iron-sulfur</keyword>
<keyword id="KW-0460">Magnesium</keyword>
<keyword id="KW-0472">Membrane</keyword>
<keyword id="KW-0479">Metal-binding</keyword>
<keyword id="KW-0560">Oxidoreductase</keyword>
<keyword id="KW-0602">Photosynthesis</keyword>
<keyword id="KW-0603">Photosystem I</keyword>
<keyword id="KW-0934">Plastid</keyword>
<keyword id="KW-0793">Thylakoid</keyword>
<keyword id="KW-0812">Transmembrane</keyword>
<keyword id="KW-1133">Transmembrane helix</keyword>
<keyword id="KW-0813">Transport</keyword>
<accession>A4QKA5</accession>
<geneLocation type="chloroplast"/>
<sequence>MIIRSPEPEVKILVDRDPIKTSFEEWAKPGHFSRTIAKGPDTTTWIWNLHADAHDFDSHTSDLEEISRKVFSAHFGQLSIIFLWLSGMYFHGARFSNYEAWLSDPTHIGPSAQVVWPIVGQEILNGDVGGGFRGIQITSGFFQIWRASGITSELQLYCTAIGALVFAALMLFAGWFHYHKAAPKLAWFQDVESMLNHHLAGLLGLGSLSWAGHQVHVSLPINQFLNAGVDPKEIPLPHEFILNRDLLAQLYPSFAEGATPFFTLNWSKYSEFLTFRGGLDPVTGGLWLTDIAHHHLAIAILFLIAGHMYRTNWGIGHGIKDILEAHKGPFTGQGHKGLYEILTTSWHAQLSLNLAMLGSLTIIVAHHMYSMPPYPYLATDYATQLSLFTHHMWIGGFLIVGAAAHAAIFMVRDYDPTNRYNDLLDRVLRHRDAIISHLNWVCIFLGFHSFGLYIHNDTMSALGRPQDMFSDTAIQLQPVFAQWIQNTHALAPGVTAPGETASTSLTWGGGELVAVGGKVALLPIPLGTADFLVHHIHAFTIHVTVLILLKGVLFARSSRLIPDKANLGFRFPCDGPGRGGTCQVSAWDHVFLGLFWMYNAISVVIFHFSWKMQSDVWGSISDQGVVTHITGGNFAQSSITINGWLRDFLWAQASQVIQSYGSSLSAYGLFFLGAHFVWAFSLMFLFSGRGYWQELIESIVWAHNKLKVAPATQPRALSIVQGRAVGVTHYLLGGIATTWAFFLARIIAVG</sequence>